<dbReference type="EMBL" id="D00339">
    <property type="protein sequence ID" value="BAA00244.1"/>
    <property type="molecule type" value="Genomic_DNA"/>
</dbReference>
<dbReference type="EMBL" id="Y00525">
    <property type="protein sequence ID" value="CAA68581.1"/>
    <property type="molecule type" value="Genomic_DNA"/>
</dbReference>
<dbReference type="EMBL" id="S59063">
    <property type="protein sequence ID" value="AAB26403.1"/>
    <property type="molecule type" value="Genomic_DNA"/>
</dbReference>
<dbReference type="SMR" id="P56267"/>
<dbReference type="STRING" id="571.AB185_16960"/>
<dbReference type="eggNOG" id="COG2205">
    <property type="taxonomic scope" value="Bacteria"/>
</dbReference>
<dbReference type="GO" id="GO:0009399">
    <property type="term" value="P:nitrogen fixation"/>
    <property type="evidence" value="ECO:0007669"/>
    <property type="project" value="UniProtKB-KW"/>
</dbReference>
<dbReference type="GO" id="GO:0000160">
    <property type="term" value="P:phosphorelay signal transduction system"/>
    <property type="evidence" value="ECO:0007669"/>
    <property type="project" value="UniProtKB-KW"/>
</dbReference>
<dbReference type="GO" id="GO:0006355">
    <property type="term" value="P:regulation of DNA-templated transcription"/>
    <property type="evidence" value="ECO:0007669"/>
    <property type="project" value="InterPro"/>
</dbReference>
<dbReference type="CDD" id="cd00130">
    <property type="entry name" value="PAS"/>
    <property type="match status" value="1"/>
</dbReference>
<dbReference type="Gene3D" id="3.30.450.20">
    <property type="entry name" value="PAS domain"/>
    <property type="match status" value="1"/>
</dbReference>
<dbReference type="InterPro" id="IPR052163">
    <property type="entry name" value="DGC-Regulatory_Protein"/>
</dbReference>
<dbReference type="InterPro" id="IPR036890">
    <property type="entry name" value="HATPase_C_sf"/>
</dbReference>
<dbReference type="InterPro" id="IPR014285">
    <property type="entry name" value="N_fixation_neg-reg_NifL"/>
</dbReference>
<dbReference type="InterPro" id="IPR001610">
    <property type="entry name" value="PAC"/>
</dbReference>
<dbReference type="InterPro" id="IPR000014">
    <property type="entry name" value="PAS"/>
</dbReference>
<dbReference type="InterPro" id="IPR000700">
    <property type="entry name" value="PAS-assoc_C"/>
</dbReference>
<dbReference type="InterPro" id="IPR035965">
    <property type="entry name" value="PAS-like_dom_sf"/>
</dbReference>
<dbReference type="InterPro" id="IPR013767">
    <property type="entry name" value="PAS_fold"/>
</dbReference>
<dbReference type="NCBIfam" id="TIGR02938">
    <property type="entry name" value="nifL_nitrog"/>
    <property type="match status" value="1"/>
</dbReference>
<dbReference type="NCBIfam" id="TIGR00229">
    <property type="entry name" value="sensory_box"/>
    <property type="match status" value="1"/>
</dbReference>
<dbReference type="PANTHER" id="PTHR46663">
    <property type="entry name" value="DIGUANYLATE CYCLASE DGCT-RELATED"/>
    <property type="match status" value="1"/>
</dbReference>
<dbReference type="PANTHER" id="PTHR46663:SF3">
    <property type="entry name" value="SLL0267 PROTEIN"/>
    <property type="match status" value="1"/>
</dbReference>
<dbReference type="Pfam" id="PF00989">
    <property type="entry name" value="PAS"/>
    <property type="match status" value="1"/>
</dbReference>
<dbReference type="SMART" id="SM00086">
    <property type="entry name" value="PAC"/>
    <property type="match status" value="1"/>
</dbReference>
<dbReference type="SMART" id="SM00091">
    <property type="entry name" value="PAS"/>
    <property type="match status" value="1"/>
</dbReference>
<dbReference type="SUPFAM" id="SSF55874">
    <property type="entry name" value="ATPase domain of HSP90 chaperone/DNA topoisomerase II/histidine kinase"/>
    <property type="match status" value="1"/>
</dbReference>
<dbReference type="SUPFAM" id="SSF55785">
    <property type="entry name" value="PYP-like sensor domain (PAS domain)"/>
    <property type="match status" value="1"/>
</dbReference>
<dbReference type="PROSITE" id="PS50113">
    <property type="entry name" value="PAC"/>
    <property type="match status" value="1"/>
</dbReference>
<dbReference type="PROSITE" id="PS50112">
    <property type="entry name" value="PAS"/>
    <property type="match status" value="1"/>
</dbReference>
<organism>
    <name type="scientific">Klebsiella oxytoca</name>
    <dbReference type="NCBI Taxonomy" id="571"/>
    <lineage>
        <taxon>Bacteria</taxon>
        <taxon>Pseudomonadati</taxon>
        <taxon>Pseudomonadota</taxon>
        <taxon>Gammaproteobacteria</taxon>
        <taxon>Enterobacterales</taxon>
        <taxon>Enterobacteriaceae</taxon>
        <taxon>Klebsiella/Raoultella group</taxon>
        <taxon>Klebsiella</taxon>
    </lineage>
</organism>
<keyword id="KW-0535">Nitrogen fixation</keyword>
<keyword id="KW-0677">Repeat</keyword>
<keyword id="KW-0804">Transcription</keyword>
<keyword id="KW-0805">Transcription regulation</keyword>
<keyword id="KW-0902">Two-component regulatory system</keyword>
<gene>
    <name type="primary">nifL</name>
</gene>
<name>NIFL_KLEOX</name>
<protein>
    <recommendedName>
        <fullName>Nitrogen fixation regulatory protein</fullName>
    </recommendedName>
</protein>
<proteinExistence type="evidence at protein level"/>
<feature type="chain" id="PRO_0000074816" description="Nitrogen fixation regulatory protein">
    <location>
        <begin position="1"/>
        <end position="495"/>
    </location>
</feature>
<feature type="domain" description="PAS 1" evidence="2">
    <location>
        <begin position="23"/>
        <end position="93"/>
    </location>
</feature>
<feature type="domain" description="PAC" evidence="3">
    <location>
        <begin position="94"/>
        <end position="148"/>
    </location>
</feature>
<feature type="domain" description="PAS 2; truncated" evidence="2">
    <location>
        <begin position="151"/>
        <end position="174"/>
    </location>
</feature>
<feature type="sequence variant" description="In strain: NG13.">
    <original>M</original>
    <variation>V</variation>
    <location>
        <position position="250"/>
    </location>
</feature>
<feature type="sequence variant" description="In strain: NG13.">
    <original>L</original>
    <variation>F</variation>
    <location>
        <position position="425"/>
    </location>
</feature>
<feature type="sequence variant" description="In strain: NG13.">
    <original>R</original>
    <variation>S</variation>
    <location>
        <position position="465"/>
    </location>
</feature>
<feature type="mutagenesis site" description="Almost no change in activity." evidence="4">
    <original>C</original>
    <variation>A</variation>
    <location>
        <position position="184"/>
    </location>
</feature>
<feature type="mutagenesis site" description="Almost no change in activity." evidence="4">
    <original>C</original>
    <variation>A</variation>
    <location>
        <position position="187"/>
    </location>
</feature>
<sequence>MTLNMMLDNAVPEAIAGALTQQHPGLFFTMVEQASVAISLTDARANIIYANPAFCRQTGYSLAQLLNQNPRLLASSQTPREIYQEMWQTLLQRQPWRGQLINQRRDGGLYLVDIDITPVLNPQGELEHYLAMQRDISVSYTLEQRLRNHMTLMEAVLNNIPAAVVVVDEQDRVVMDNLAYKTFCADCGGKELLVELQVSPRKMGPGAEQILPVVVRGAVRWLSVTCWALPGVSEEASRYFVDSAPARTLMVIADCTQQRQQQEQGRLDRLKQQMTAGKLLAAIRESLDAALIQLNCPINMLAAARRLNGEGSGNVALDAAWREGEEAMARLQRCRPSLELESNAVWPLQPFFDDLYALYRTRFDDRARLQVDMASPHLVGFGQRTQLLACLSLWLDRTLALAAELPSVPLEIELYAEEDEGWLSLYLNDNVPLLQVRYAHSPDALNSPGKGMELRLIQTLVAYHRGAIELASRPQGGTSLVLRFPLFNTLTGGEQ</sequence>
<evidence type="ECO:0000250" key="1"/>
<evidence type="ECO:0000255" key="2">
    <source>
        <dbReference type="PROSITE-ProRule" id="PRU00140"/>
    </source>
</evidence>
<evidence type="ECO:0000255" key="3">
    <source>
        <dbReference type="PROSITE-ProRule" id="PRU00141"/>
    </source>
</evidence>
<evidence type="ECO:0000269" key="4">
    <source>
    </source>
</evidence>
<reference key="1">
    <citation type="journal article" date="1986" name="Mol. Gen. Genet.">
        <title>Nucleotide sequence of the nifLA operon of Klebsiella oxytoca NG13 and characterization of the gene products.</title>
        <authorList>
            <person name="Kim Y.-M."/>
            <person name="Ahn K.-J."/>
            <person name="Beppu T."/>
            <person name="Uozumi T."/>
        </authorList>
    </citation>
    <scope>NUCLEOTIDE SEQUENCE [GENOMIC DNA]</scope>
    <source>
        <strain>NG13</strain>
    </source>
</reference>
<reference key="2">
    <citation type="journal article" date="1987" name="Mol. Microbiol.">
        <title>Sequence of nifL from Klebsiella pneumoniae: mode of action and relationship to two families of regulatory proteins.</title>
        <authorList>
            <person name="Drummond M.H."/>
            <person name="Wootton J.C."/>
        </authorList>
    </citation>
    <scope>NUCLEOTIDE SEQUENCE [GENOMIC DNA]</scope>
    <source>
        <strain>M5a1</strain>
    </source>
</reference>
<reference key="3">
    <citation type="journal article" date="1991" name="Gene">
        <title>Cys184 and Cys187 of NifL protein of Klebsiella pneumoniae are not absolutely required for inhibition of NifA activity.</title>
        <authorList>
            <person name="Contraras A."/>
            <person name="Drummond M.H."/>
        </authorList>
    </citation>
    <scope>MUTAGENESIS OF CYS-184 AND CYS-187</scope>
</reference>
<reference key="4">
    <citation type="journal article" date="1993" name="Arch. Microbiol.">
        <title>Characterisation of mutations in the Klebsiella pneumoniae nitrogen fixation regulatory gene nifL which impair oxygen regulation.</title>
        <authorList>
            <person name="Sidoti C."/>
            <person name="Harwood G."/>
            <person name="Ackerman R."/>
            <person name="Coppard J."/>
            <person name="Merrick M.J."/>
        </authorList>
    </citation>
    <scope>MUTAGENESIS</scope>
</reference>
<comment type="function">
    <text evidence="1">Required for the inhibition of NifA activity in response to oxygen and low level of fixed nitrogen.</text>
</comment>
<accession>P56267</accession>